<accession>Q8ILP3</accession>
<feature type="signal peptide" evidence="1">
    <location>
        <begin position="1"/>
        <end position="22"/>
    </location>
</feature>
<feature type="chain" id="PRO_5019107734" description="Surface protein P113" evidence="1">
    <location>
        <begin position="23"/>
        <end position="945"/>
    </location>
</feature>
<feature type="propeptide" id="PRO_0000448667" description="Removed in mature form" evidence="1">
    <location>
        <begin position="946"/>
        <end position="969"/>
    </location>
</feature>
<feature type="region of interest" description="Disordered" evidence="3">
    <location>
        <begin position="223"/>
        <end position="328"/>
    </location>
</feature>
<feature type="region of interest" description="Disordered" evidence="3">
    <location>
        <begin position="688"/>
        <end position="947"/>
    </location>
</feature>
<feature type="compositionally biased region" description="Polar residues" evidence="3">
    <location>
        <begin position="229"/>
        <end position="241"/>
    </location>
</feature>
<feature type="compositionally biased region" description="Basic and acidic residues" evidence="3">
    <location>
        <begin position="300"/>
        <end position="311"/>
    </location>
</feature>
<feature type="compositionally biased region" description="Low complexity" evidence="3">
    <location>
        <begin position="312"/>
        <end position="325"/>
    </location>
</feature>
<feature type="compositionally biased region" description="Polar residues" evidence="3">
    <location>
        <begin position="688"/>
        <end position="705"/>
    </location>
</feature>
<feature type="compositionally biased region" description="Low complexity" evidence="3">
    <location>
        <begin position="713"/>
        <end position="727"/>
    </location>
</feature>
<feature type="compositionally biased region" description="Basic and acidic residues" evidence="3">
    <location>
        <begin position="728"/>
        <end position="749"/>
    </location>
</feature>
<feature type="compositionally biased region" description="Acidic residues" evidence="3">
    <location>
        <begin position="798"/>
        <end position="811"/>
    </location>
</feature>
<feature type="compositionally biased region" description="Basic and acidic residues" evidence="3">
    <location>
        <begin position="812"/>
        <end position="822"/>
    </location>
</feature>
<feature type="compositionally biased region" description="Acidic residues" evidence="3">
    <location>
        <begin position="823"/>
        <end position="841"/>
    </location>
</feature>
<feature type="compositionally biased region" description="Basic and acidic residues" evidence="3">
    <location>
        <begin position="842"/>
        <end position="854"/>
    </location>
</feature>
<feature type="compositionally biased region" description="Acidic residues" evidence="3">
    <location>
        <begin position="855"/>
        <end position="864"/>
    </location>
</feature>
<feature type="compositionally biased region" description="Basic and acidic residues" evidence="3">
    <location>
        <begin position="883"/>
        <end position="896"/>
    </location>
</feature>
<feature type="compositionally biased region" description="Low complexity" evidence="3">
    <location>
        <begin position="897"/>
        <end position="907"/>
    </location>
</feature>
<feature type="compositionally biased region" description="Basic and acidic residues" evidence="3">
    <location>
        <begin position="908"/>
        <end position="917"/>
    </location>
</feature>
<feature type="compositionally biased region" description="Acidic residues" evidence="3">
    <location>
        <begin position="918"/>
        <end position="936"/>
    </location>
</feature>
<feature type="compositionally biased region" description="Polar residues" evidence="3">
    <location>
        <begin position="937"/>
        <end position="947"/>
    </location>
</feature>
<feature type="lipid moiety-binding region" description="GPI-anchor amidated asparagine" evidence="1">
    <location>
        <position position="945"/>
    </location>
</feature>
<feature type="glycosylation site" description="N-linked (GlcNAc...) asparagine" evidence="2">
    <location>
        <position position="207"/>
    </location>
</feature>
<feature type="glycosylation site" description="N-linked (GlcNAc...) asparagine" evidence="2">
    <location>
        <position position="268"/>
    </location>
</feature>
<feature type="glycosylation site" description="N-linked (GlcNAc...) asparagine" evidence="2">
    <location>
        <position position="317"/>
    </location>
</feature>
<feature type="glycosylation site" description="N-linked (GlcNAc...) asparagine" evidence="2">
    <location>
        <position position="360"/>
    </location>
</feature>
<feature type="glycosylation site" description="N-linked (GlcNAc...) asparagine" evidence="2">
    <location>
        <position position="661"/>
    </location>
</feature>
<feature type="glycosylation site" description="N-linked (GlcNAc...) asparagine" evidence="2">
    <location>
        <position position="697"/>
    </location>
</feature>
<feature type="glycosylation site" description="N-linked (GlcNAc...) asparagine" evidence="2">
    <location>
        <position position="779"/>
    </location>
</feature>
<feature type="glycosylation site" description="N-linked (GlcNAc...) asparagine" evidence="2">
    <location>
        <position position="876"/>
    </location>
</feature>
<feature type="glycosylation site" description="N-linked (GlcNAc...) asparagine" evidence="2">
    <location>
        <position position="938"/>
    </location>
</feature>
<feature type="glycosylation site" description="N-linked (GlcNAc...) asparagine" evidence="2">
    <location>
        <position position="941"/>
    </location>
</feature>
<feature type="glycosylation site" description="N-linked (GlcNAc...) asparagine" evidence="2">
    <location>
        <position position="945"/>
    </location>
</feature>
<feature type="strand" evidence="10">
    <location>
        <begin position="24"/>
        <end position="29"/>
    </location>
</feature>
<feature type="strand" evidence="10">
    <location>
        <begin position="35"/>
        <end position="38"/>
    </location>
</feature>
<feature type="strand" evidence="10">
    <location>
        <begin position="40"/>
        <end position="54"/>
    </location>
</feature>
<feature type="strand" evidence="10">
    <location>
        <begin position="60"/>
        <end position="64"/>
    </location>
</feature>
<feature type="helix" evidence="10">
    <location>
        <begin position="66"/>
        <end position="73"/>
    </location>
</feature>
<feature type="strand" evidence="10">
    <location>
        <begin position="77"/>
        <end position="87"/>
    </location>
</feature>
<feature type="helix" evidence="10">
    <location>
        <begin position="94"/>
        <end position="98"/>
    </location>
</feature>
<feature type="strand" evidence="10">
    <location>
        <begin position="99"/>
        <end position="104"/>
    </location>
</feature>
<feature type="strand" evidence="10">
    <location>
        <begin position="112"/>
        <end position="121"/>
    </location>
</feature>
<feature type="strand" evidence="10">
    <location>
        <begin position="130"/>
        <end position="132"/>
    </location>
</feature>
<feature type="strand" evidence="10">
    <location>
        <begin position="134"/>
        <end position="138"/>
    </location>
</feature>
<feature type="strand" evidence="10">
    <location>
        <begin position="146"/>
        <end position="161"/>
    </location>
</feature>
<feature type="strand" evidence="10">
    <location>
        <begin position="165"/>
        <end position="167"/>
    </location>
</feature>
<feature type="strand" evidence="10">
    <location>
        <begin position="169"/>
        <end position="171"/>
    </location>
</feature>
<feature type="helix" evidence="10">
    <location>
        <begin position="173"/>
        <end position="178"/>
    </location>
</feature>
<feature type="strand" evidence="10">
    <location>
        <begin position="183"/>
        <end position="186"/>
    </location>
</feature>
<feature type="helix" evidence="10">
    <location>
        <begin position="190"/>
        <end position="196"/>
    </location>
</feature>
<feature type="helix" evidence="10">
    <location>
        <begin position="203"/>
        <end position="208"/>
    </location>
</feature>
<feature type="strand" evidence="10">
    <location>
        <begin position="210"/>
        <end position="218"/>
    </location>
</feature>
<proteinExistence type="evidence at protein level"/>
<gene>
    <name evidence="6" type="primary">P113</name>
    <name evidence="8" type="ORF">PF3D7_1420700</name>
</gene>
<organism evidence="9">
    <name type="scientific">Plasmodium falciparum (isolate 3D7)</name>
    <dbReference type="NCBI Taxonomy" id="36329"/>
    <lineage>
        <taxon>Eukaryota</taxon>
        <taxon>Sar</taxon>
        <taxon>Alveolata</taxon>
        <taxon>Apicomplexa</taxon>
        <taxon>Aconoidasida</taxon>
        <taxon>Haemosporida</taxon>
        <taxon>Plasmodiidae</taxon>
        <taxon>Plasmodium</taxon>
        <taxon>Plasmodium (Laverania)</taxon>
    </lineage>
</organism>
<dbReference type="EMBL" id="LN999946">
    <property type="protein sequence ID" value="CZT99914.1"/>
    <property type="molecule type" value="Genomic_DNA"/>
</dbReference>
<dbReference type="RefSeq" id="XP_001348374.1">
    <property type="nucleotide sequence ID" value="XM_001348338.1"/>
</dbReference>
<dbReference type="PDB" id="6Z2L">
    <property type="method" value="X-ray"/>
    <property type="resolution" value="1.95 A"/>
    <property type="chains" value="A=23-219"/>
</dbReference>
<dbReference type="PDBsum" id="6Z2L"/>
<dbReference type="SMR" id="Q8ILP3"/>
<dbReference type="FunCoup" id="Q8ILP3">
    <property type="interactions" value="480"/>
</dbReference>
<dbReference type="IntAct" id="Q8ILP3">
    <property type="interactions" value="9"/>
</dbReference>
<dbReference type="STRING" id="36329.Q8ILP3"/>
<dbReference type="GlyCosmos" id="Q8ILP3">
    <property type="glycosylation" value="11 sites, No reported glycans"/>
</dbReference>
<dbReference type="SwissPalm" id="Q8ILP3"/>
<dbReference type="PaxDb" id="5833-PF14_0201"/>
<dbReference type="ABCD" id="Q8ILP3">
    <property type="antibodies" value="1 sequenced antibody"/>
</dbReference>
<dbReference type="EnsemblProtists" id="CZT99914">
    <property type="protein sequence ID" value="CZT99914"/>
    <property type="gene ID" value="PF3D7_1420700"/>
</dbReference>
<dbReference type="GeneID" id="811782"/>
<dbReference type="KEGG" id="pfa:PF3D7_1420700"/>
<dbReference type="VEuPathDB" id="PlasmoDB:PF3D7_1420700"/>
<dbReference type="HOGENOM" id="CLU_306005_0_0_1"/>
<dbReference type="InParanoid" id="Q8ILP3"/>
<dbReference type="OMA" id="NEKDQCY"/>
<dbReference type="OrthoDB" id="371791at2759"/>
<dbReference type="PhylomeDB" id="Q8ILP3"/>
<dbReference type="Proteomes" id="UP000001450">
    <property type="component" value="Chromosome 14"/>
</dbReference>
<dbReference type="GO" id="GO:0005886">
    <property type="term" value="C:plasma membrane"/>
    <property type="evidence" value="ECO:0000314"/>
    <property type="project" value="UniProtKB"/>
</dbReference>
<dbReference type="GO" id="GO:0098552">
    <property type="term" value="C:side of membrane"/>
    <property type="evidence" value="ECO:0007669"/>
    <property type="project" value="UniProtKB-KW"/>
</dbReference>
<dbReference type="GO" id="GO:0020005">
    <property type="term" value="C:symbiont-containing vacuole membrane"/>
    <property type="evidence" value="ECO:0000314"/>
    <property type="project" value="GeneDB"/>
</dbReference>
<dbReference type="CDD" id="cd22848">
    <property type="entry name" value="Gal_Rha_Lectin_like-P113_rpt2"/>
    <property type="match status" value="1"/>
</dbReference>
<dbReference type="CDD" id="cd22847">
    <property type="entry name" value="Gal_Rha_Lectin_like_P113_rpt1"/>
    <property type="match status" value="1"/>
</dbReference>
<reference evidence="9" key="1">
    <citation type="journal article" date="2002" name="Nature">
        <title>Genome sequence of the human malaria parasite Plasmodium falciparum.</title>
        <authorList>
            <person name="Gardner M.J."/>
            <person name="Hall N."/>
            <person name="Fung E."/>
            <person name="White O."/>
            <person name="Berriman M."/>
            <person name="Hyman R.W."/>
            <person name="Carlton J.M."/>
            <person name="Pain A."/>
            <person name="Nelson K.E."/>
            <person name="Bowman S."/>
            <person name="Paulsen I.T."/>
            <person name="James K.D."/>
            <person name="Eisen J.A."/>
            <person name="Rutherford K.M."/>
            <person name="Salzberg S.L."/>
            <person name="Craig A."/>
            <person name="Kyes S."/>
            <person name="Chan M.-S."/>
            <person name="Nene V."/>
            <person name="Shallom S.J."/>
            <person name="Suh B."/>
            <person name="Peterson J."/>
            <person name="Angiuoli S."/>
            <person name="Pertea M."/>
            <person name="Allen J."/>
            <person name="Selengut J."/>
            <person name="Haft D."/>
            <person name="Mather M.W."/>
            <person name="Vaidya A.B."/>
            <person name="Martin D.M.A."/>
            <person name="Fairlamb A.H."/>
            <person name="Fraunholz M.J."/>
            <person name="Roos D.S."/>
            <person name="Ralph S.A."/>
            <person name="McFadden G.I."/>
            <person name="Cummings L.M."/>
            <person name="Subramanian G.M."/>
            <person name="Mungall C."/>
            <person name="Venter J.C."/>
            <person name="Carucci D.J."/>
            <person name="Hoffman S.L."/>
            <person name="Newbold C."/>
            <person name="Davis R.W."/>
            <person name="Fraser C.M."/>
            <person name="Barrell B.G."/>
        </authorList>
    </citation>
    <scope>NUCLEOTIDE SEQUENCE [LARGE SCALE GENOMIC DNA]</scope>
    <source>
        <strain evidence="9">3D7</strain>
    </source>
</reference>
<reference evidence="7" key="2">
    <citation type="journal article" date="2005" name="J. Biol. Chem.">
        <title>Distinct protein classes including novel merozoite surface antigens in Raft-like membranes of Plasmodium falciparum.</title>
        <authorList>
            <person name="Sanders P.R."/>
            <person name="Gilson P.R."/>
            <person name="Cantin G.T."/>
            <person name="Greenbaum D.C."/>
            <person name="Nebl T."/>
            <person name="Carucci D.J."/>
            <person name="McConville M.J."/>
            <person name="Schofield L."/>
            <person name="Hodder A.N."/>
            <person name="Yates J.R. III"/>
            <person name="Crabb B.S."/>
        </authorList>
    </citation>
    <scope>SUBCELLULAR LOCATION</scope>
</reference>
<reference evidence="7" key="3">
    <citation type="journal article" date="2017" name="Nat. Commun.">
        <title>P113 is a merozoite surface protein that binds the N terminus of Plasmodium falciparum RH5.</title>
        <authorList>
            <person name="Galaway F."/>
            <person name="Drought L.G."/>
            <person name="Fala M."/>
            <person name="Cross N."/>
            <person name="Kemp A.C."/>
            <person name="Rayner J.C."/>
            <person name="Wright G.J."/>
        </authorList>
    </citation>
    <scope>FUNCTION</scope>
    <scope>IDENTIFICATION IN COMPLEX WITH RH5 AND HUMAN BSG</scope>
    <scope>INTERACTION WITH RH5</scope>
</reference>
<comment type="function">
    <text evidence="5">Membrane receptor which tethers secreted RH5 to the merozoite membrane during merozoite invasion of host erythocytes.</text>
</comment>
<comment type="subunit">
    <text evidence="5">Forms a complex composed of RH5, P113 and human BSG/basigin; the complex bridges the merozoite and host erythrocyte membranes (PubMed:28186186). Within the complex, interacts with RH5 (via N-terminus); the interaction tethers RH5 to the merozoite membrane (PubMed:28186186).</text>
</comment>
<comment type="subcellular location">
    <subcellularLocation>
        <location evidence="4 5">Cell membrane</location>
        <topology evidence="4">Lipid-anchor</topology>
        <topology evidence="4">GPI-anchor</topology>
    </subcellularLocation>
</comment>
<comment type="developmental stage">
    <text evidence="5">Expressed during parasite asexual blood stages, specifically at the schizont stage and in free merozoites (at protein level).</text>
</comment>
<keyword id="KW-0002">3D-structure</keyword>
<keyword id="KW-1003">Cell membrane</keyword>
<keyword id="KW-0325">Glycoprotein</keyword>
<keyword id="KW-0336">GPI-anchor</keyword>
<keyword id="KW-0449">Lipoprotein</keyword>
<keyword id="KW-0472">Membrane</keyword>
<keyword id="KW-1185">Reference proteome</keyword>
<keyword id="KW-0732">Signal</keyword>
<name>P113_PLAF7</name>
<protein>
    <recommendedName>
        <fullName evidence="8">Surface protein P113</fullName>
    </recommendedName>
</protein>
<sequence>MKIPFFILHILLLQFLLCLIRCYVHNDVIKFGEENSLKCSQGNLYVLHCEVQCLNGNNEIIHKRCNDDIEKKCNGNNKCIYFFEYELRKKTQSFRNKNSIEISECVESEQNEVKTSTTCLLSNSFILDEAFIQYFFFIKNKNEEPVICKDGNINIKSALLHSPFCEIKLKDISEYIRKKCDNNKECLIDPLDVQKNLLNEEDPCYINNSYVSVNVVCNKEEEIGDESTDSSSMEIQDSTSNEQDENVKGMSSSQEMNSNNDENKNQDNESDDDVNNNNNNNNDDQDEQGNDGDVTSSMNKNEDNKDLEHGSSNDVNNNTDTLVNNKENKEFVLKEKSSLTSKINKELAHRTALFNKLADNISLLLNKKYDSFEIKDVLEDRYNEMKRDANPDVYYIYLMDTLDIEKIEDINLEEVKMSLLASLKETMNKIDTIEKKIEEFKNKYISLYNKVKTTMPELFDLNEDLVLLYNDFPFDNGMISSDIFFKYNPSENIMDHQEMVKKGSITEDELRIVNDLEPLDNYRRRKRITELRKILVEKLRILYLEKNNLFNTQASCIKSYCYKNPLNLKTLEVLLKKNYYRLKENKDYDVVSSIIQHLDNVDANKKKKWLTHERILKKLQVLIAEGYKRINEKEKDIDRRMAVYNALYEKAQSYNLQKLFNDSNDFLKKYAIMGNSFDDGDEVFGSQSSNFNIFDSNNTDQNNEQEQPKQDDQLLNNNNDDVLSESNNENKEKTSDDATHKETQEKSDQEPSQNIQEDNSDEKHAENEENVEQIETDSNVSEEANDENKDNMQTTTDEGTEELQQNDEDAESLTKENSKSEEQENEDSTDAEAIDKEEVETEEKGKDEQKKDEQKEQDEEEDGEKENKHKSSETTNETVTDIEENKNEVKGEEHLQGSEQSIEASESSQKDETKETEDKEEYVNANDDESSEEDTTPNETNKTDNGSSFFFAMSNALLVILLLLFIEFL</sequence>
<evidence type="ECO:0000255" key="1"/>
<evidence type="ECO:0000255" key="2">
    <source>
        <dbReference type="PROSITE-ProRule" id="PRU00498"/>
    </source>
</evidence>
<evidence type="ECO:0000256" key="3">
    <source>
        <dbReference type="SAM" id="MobiDB-lite"/>
    </source>
</evidence>
<evidence type="ECO:0000269" key="4">
    <source>
    </source>
</evidence>
<evidence type="ECO:0000269" key="5">
    <source>
    </source>
</evidence>
<evidence type="ECO:0000303" key="6">
    <source>
    </source>
</evidence>
<evidence type="ECO:0000305" key="7"/>
<evidence type="ECO:0000312" key="8">
    <source>
        <dbReference type="EMBL" id="CZT99914.1"/>
    </source>
</evidence>
<evidence type="ECO:0000312" key="9">
    <source>
        <dbReference type="Proteomes" id="UP000001450"/>
    </source>
</evidence>
<evidence type="ECO:0007829" key="10">
    <source>
        <dbReference type="PDB" id="6Z2L"/>
    </source>
</evidence>